<comment type="function">
    <text evidence="1">Catalyzes the ATP-dependent amidation of deamido-NAD to form NAD. Uses ammonia as a nitrogen source.</text>
</comment>
<comment type="catalytic activity">
    <reaction evidence="1">
        <text>deamido-NAD(+) + NH4(+) + ATP = AMP + diphosphate + NAD(+) + H(+)</text>
        <dbReference type="Rhea" id="RHEA:21188"/>
        <dbReference type="ChEBI" id="CHEBI:15378"/>
        <dbReference type="ChEBI" id="CHEBI:28938"/>
        <dbReference type="ChEBI" id="CHEBI:30616"/>
        <dbReference type="ChEBI" id="CHEBI:33019"/>
        <dbReference type="ChEBI" id="CHEBI:57540"/>
        <dbReference type="ChEBI" id="CHEBI:58437"/>
        <dbReference type="ChEBI" id="CHEBI:456215"/>
        <dbReference type="EC" id="6.3.1.5"/>
    </reaction>
</comment>
<comment type="pathway">
    <text evidence="1">Cofactor biosynthesis; NAD(+) biosynthesis; NAD(+) from deamido-NAD(+) (ammonia route): step 1/1.</text>
</comment>
<comment type="subunit">
    <text evidence="1">Homodimer.</text>
</comment>
<comment type="similarity">
    <text evidence="1">Belongs to the NAD synthetase family.</text>
</comment>
<dbReference type="EC" id="6.3.1.5" evidence="1"/>
<dbReference type="EMBL" id="CT573326">
    <property type="protein sequence ID" value="CAK17567.1"/>
    <property type="molecule type" value="Genomic_DNA"/>
</dbReference>
<dbReference type="RefSeq" id="WP_011535929.1">
    <property type="nucleotide sequence ID" value="NC_008027.1"/>
</dbReference>
<dbReference type="SMR" id="Q1I469"/>
<dbReference type="STRING" id="384676.PSEEN4920"/>
<dbReference type="GeneID" id="32807870"/>
<dbReference type="KEGG" id="pen:PSEEN4920"/>
<dbReference type="eggNOG" id="COG0171">
    <property type="taxonomic scope" value="Bacteria"/>
</dbReference>
<dbReference type="HOGENOM" id="CLU_059327_3_0_6"/>
<dbReference type="OrthoDB" id="3266517at2"/>
<dbReference type="UniPathway" id="UPA00253">
    <property type="reaction ID" value="UER00333"/>
</dbReference>
<dbReference type="Proteomes" id="UP000000658">
    <property type="component" value="Chromosome"/>
</dbReference>
<dbReference type="GO" id="GO:0005737">
    <property type="term" value="C:cytoplasm"/>
    <property type="evidence" value="ECO:0007669"/>
    <property type="project" value="InterPro"/>
</dbReference>
<dbReference type="GO" id="GO:0005524">
    <property type="term" value="F:ATP binding"/>
    <property type="evidence" value="ECO:0007669"/>
    <property type="project" value="UniProtKB-UniRule"/>
</dbReference>
<dbReference type="GO" id="GO:0004359">
    <property type="term" value="F:glutaminase activity"/>
    <property type="evidence" value="ECO:0007669"/>
    <property type="project" value="InterPro"/>
</dbReference>
<dbReference type="GO" id="GO:0046872">
    <property type="term" value="F:metal ion binding"/>
    <property type="evidence" value="ECO:0007669"/>
    <property type="project" value="UniProtKB-KW"/>
</dbReference>
<dbReference type="GO" id="GO:0003952">
    <property type="term" value="F:NAD+ synthase (glutamine-hydrolyzing) activity"/>
    <property type="evidence" value="ECO:0007669"/>
    <property type="project" value="InterPro"/>
</dbReference>
<dbReference type="GO" id="GO:0008795">
    <property type="term" value="F:NAD+ synthase activity"/>
    <property type="evidence" value="ECO:0007669"/>
    <property type="project" value="UniProtKB-UniRule"/>
</dbReference>
<dbReference type="GO" id="GO:0009435">
    <property type="term" value="P:NAD biosynthetic process"/>
    <property type="evidence" value="ECO:0007669"/>
    <property type="project" value="UniProtKB-UniRule"/>
</dbReference>
<dbReference type="CDD" id="cd00553">
    <property type="entry name" value="NAD_synthase"/>
    <property type="match status" value="1"/>
</dbReference>
<dbReference type="Gene3D" id="3.40.50.620">
    <property type="entry name" value="HUPs"/>
    <property type="match status" value="1"/>
</dbReference>
<dbReference type="HAMAP" id="MF_00193">
    <property type="entry name" value="NadE_ammonia_dep"/>
    <property type="match status" value="1"/>
</dbReference>
<dbReference type="InterPro" id="IPR022310">
    <property type="entry name" value="NAD/GMP_synthase"/>
</dbReference>
<dbReference type="InterPro" id="IPR003694">
    <property type="entry name" value="NAD_synthase"/>
</dbReference>
<dbReference type="InterPro" id="IPR022926">
    <property type="entry name" value="NH(3)-dep_NAD(+)_synth"/>
</dbReference>
<dbReference type="InterPro" id="IPR014729">
    <property type="entry name" value="Rossmann-like_a/b/a_fold"/>
</dbReference>
<dbReference type="NCBIfam" id="TIGR00552">
    <property type="entry name" value="nadE"/>
    <property type="match status" value="1"/>
</dbReference>
<dbReference type="NCBIfam" id="NF001979">
    <property type="entry name" value="PRK00768.1"/>
    <property type="match status" value="1"/>
</dbReference>
<dbReference type="PANTHER" id="PTHR23090">
    <property type="entry name" value="NH 3 /GLUTAMINE-DEPENDENT NAD + SYNTHETASE"/>
    <property type="match status" value="1"/>
</dbReference>
<dbReference type="PANTHER" id="PTHR23090:SF7">
    <property type="entry name" value="NH(3)-DEPENDENT NAD(+) SYNTHETASE"/>
    <property type="match status" value="1"/>
</dbReference>
<dbReference type="Pfam" id="PF02540">
    <property type="entry name" value="NAD_synthase"/>
    <property type="match status" value="1"/>
</dbReference>
<dbReference type="SUPFAM" id="SSF52402">
    <property type="entry name" value="Adenine nucleotide alpha hydrolases-like"/>
    <property type="match status" value="1"/>
</dbReference>
<sequence length="275" mass="29406">MQAVQQEIAQALKVQPPFEGAAALEQEVARRVAFIKGCLNNARLKTLVLGISGGVDSLTAALLAQRAINELRSETGDAGYRFIAVRLPYQVQHDEHDAQACLEVIKADEVHTVDIAPAVRALAAETEALKGGSPSLVDFVVGNIKARTRMVAQYTIAGARAGLVIGTDHAAEAVMGFFTKFGDGACDLAPLSGLVKNQVRAIARSFGAPESLVEKVPTADLEDLEPGKPDEASHGVTYQQIDAFLHGQPVSQEAFDIIVATYRKTQHKRELPFAP</sequence>
<name>NADE_PSEE4</name>
<protein>
    <recommendedName>
        <fullName evidence="1">NH(3)-dependent NAD(+) synthetase</fullName>
        <ecNumber evidence="1">6.3.1.5</ecNumber>
    </recommendedName>
</protein>
<proteinExistence type="inferred from homology"/>
<accession>Q1I469</accession>
<evidence type="ECO:0000255" key="1">
    <source>
        <dbReference type="HAMAP-Rule" id="MF_00193"/>
    </source>
</evidence>
<reference key="1">
    <citation type="journal article" date="2006" name="Nat. Biotechnol.">
        <title>Complete genome sequence of the entomopathogenic and metabolically versatile soil bacterium Pseudomonas entomophila.</title>
        <authorList>
            <person name="Vodovar N."/>
            <person name="Vallenet D."/>
            <person name="Cruveiller S."/>
            <person name="Rouy Z."/>
            <person name="Barbe V."/>
            <person name="Acosta C."/>
            <person name="Cattolico L."/>
            <person name="Jubin C."/>
            <person name="Lajus A."/>
            <person name="Segurens B."/>
            <person name="Vacherie B."/>
            <person name="Wincker P."/>
            <person name="Weissenbach J."/>
            <person name="Lemaitre B."/>
            <person name="Medigue C."/>
            <person name="Boccard F."/>
        </authorList>
    </citation>
    <scope>NUCLEOTIDE SEQUENCE [LARGE SCALE GENOMIC DNA]</scope>
    <source>
        <strain>L48</strain>
    </source>
</reference>
<gene>
    <name evidence="1" type="primary">nadE</name>
    <name type="ordered locus">PSEEN4920</name>
</gene>
<keyword id="KW-0067">ATP-binding</keyword>
<keyword id="KW-0436">Ligase</keyword>
<keyword id="KW-0460">Magnesium</keyword>
<keyword id="KW-0479">Metal-binding</keyword>
<keyword id="KW-0520">NAD</keyword>
<keyword id="KW-0547">Nucleotide-binding</keyword>
<feature type="chain" id="PRO_1000077583" description="NH(3)-dependent NAD(+) synthetase">
    <location>
        <begin position="1"/>
        <end position="275"/>
    </location>
</feature>
<feature type="binding site" evidence="1">
    <location>
        <begin position="50"/>
        <end position="57"/>
    </location>
    <ligand>
        <name>ATP</name>
        <dbReference type="ChEBI" id="CHEBI:30616"/>
    </ligand>
</feature>
<feature type="binding site" evidence="1">
    <location>
        <position position="56"/>
    </location>
    <ligand>
        <name>Mg(2+)</name>
        <dbReference type="ChEBI" id="CHEBI:18420"/>
    </ligand>
</feature>
<feature type="binding site" evidence="1">
    <location>
        <position position="147"/>
    </location>
    <ligand>
        <name>deamido-NAD(+)</name>
        <dbReference type="ChEBI" id="CHEBI:58437"/>
    </ligand>
</feature>
<feature type="binding site" evidence="1">
    <location>
        <position position="167"/>
    </location>
    <ligand>
        <name>ATP</name>
        <dbReference type="ChEBI" id="CHEBI:30616"/>
    </ligand>
</feature>
<feature type="binding site" evidence="1">
    <location>
        <position position="172"/>
    </location>
    <ligand>
        <name>Mg(2+)</name>
        <dbReference type="ChEBI" id="CHEBI:18420"/>
    </ligand>
</feature>
<feature type="binding site" evidence="1">
    <location>
        <position position="180"/>
    </location>
    <ligand>
        <name>deamido-NAD(+)</name>
        <dbReference type="ChEBI" id="CHEBI:58437"/>
    </ligand>
</feature>
<feature type="binding site" evidence="1">
    <location>
        <position position="187"/>
    </location>
    <ligand>
        <name>deamido-NAD(+)</name>
        <dbReference type="ChEBI" id="CHEBI:58437"/>
    </ligand>
</feature>
<feature type="binding site" evidence="1">
    <location>
        <position position="196"/>
    </location>
    <ligand>
        <name>ATP</name>
        <dbReference type="ChEBI" id="CHEBI:30616"/>
    </ligand>
</feature>
<feature type="binding site" evidence="1">
    <location>
        <position position="218"/>
    </location>
    <ligand>
        <name>ATP</name>
        <dbReference type="ChEBI" id="CHEBI:30616"/>
    </ligand>
</feature>
<feature type="binding site" evidence="1">
    <location>
        <begin position="267"/>
        <end position="268"/>
    </location>
    <ligand>
        <name>deamido-NAD(+)</name>
        <dbReference type="ChEBI" id="CHEBI:58437"/>
    </ligand>
</feature>
<organism>
    <name type="scientific">Pseudomonas entomophila (strain L48)</name>
    <dbReference type="NCBI Taxonomy" id="384676"/>
    <lineage>
        <taxon>Bacteria</taxon>
        <taxon>Pseudomonadati</taxon>
        <taxon>Pseudomonadota</taxon>
        <taxon>Gammaproteobacteria</taxon>
        <taxon>Pseudomonadales</taxon>
        <taxon>Pseudomonadaceae</taxon>
        <taxon>Pseudomonas</taxon>
    </lineage>
</organism>